<accession>Q6DFT3</accession>
<keyword id="KW-1185">Reference proteome</keyword>
<feature type="chain" id="PRO_0000254607" description="Serine/threonine-protein phosphatase 4 regulatory subunit 3">
    <location>
        <begin position="1"/>
        <end position="820"/>
    </location>
</feature>
<feature type="domain" description="WH1">
    <location>
        <begin position="1"/>
        <end position="100"/>
    </location>
</feature>
<feature type="region of interest" description="Disordered" evidence="3">
    <location>
        <begin position="687"/>
        <end position="711"/>
    </location>
</feature>
<feature type="region of interest" description="Disordered" evidence="3">
    <location>
        <begin position="750"/>
        <end position="820"/>
    </location>
</feature>
<feature type="compositionally biased region" description="Basic and acidic residues" evidence="3">
    <location>
        <begin position="701"/>
        <end position="711"/>
    </location>
</feature>
<feature type="compositionally biased region" description="Polar residues" evidence="3">
    <location>
        <begin position="750"/>
        <end position="761"/>
    </location>
</feature>
<feature type="compositionally biased region" description="Low complexity" evidence="3">
    <location>
        <begin position="770"/>
        <end position="784"/>
    </location>
</feature>
<feature type="compositionally biased region" description="Acidic residues" evidence="3">
    <location>
        <begin position="798"/>
        <end position="809"/>
    </location>
</feature>
<proteinExistence type="evidence at transcript level"/>
<gene>
    <name evidence="2" type="primary">ppp4r3b</name>
    <name type="synonym">smek2</name>
</gene>
<protein>
    <recommendedName>
        <fullName evidence="2">Serine/threonine-protein phosphatase 4 regulatory subunit 3</fullName>
    </recommendedName>
    <alternativeName>
        <fullName>SMEK homolog 2</fullName>
    </alternativeName>
</protein>
<dbReference type="EMBL" id="BC076650">
    <property type="protein sequence ID" value="AAH76650.1"/>
    <property type="molecule type" value="mRNA"/>
</dbReference>
<dbReference type="RefSeq" id="NP_001005004.1">
    <property type="nucleotide sequence ID" value="NM_001005004.1"/>
</dbReference>
<dbReference type="FunCoup" id="Q6DFT3">
    <property type="interactions" value="3348"/>
</dbReference>
<dbReference type="STRING" id="8364.ENSXETP00000038806"/>
<dbReference type="PaxDb" id="8364-ENSXETP00000013375"/>
<dbReference type="GeneID" id="448490"/>
<dbReference type="KEGG" id="xtr:448490"/>
<dbReference type="AGR" id="Xenbase:XB-GENE-1004661"/>
<dbReference type="CTD" id="57223"/>
<dbReference type="Xenbase" id="XB-GENE-1004661">
    <property type="gene designation" value="ppp4r3b"/>
</dbReference>
<dbReference type="eggNOG" id="KOG2175">
    <property type="taxonomic scope" value="Eukaryota"/>
</dbReference>
<dbReference type="HOGENOM" id="CLU_004909_3_0_1"/>
<dbReference type="InParanoid" id="Q6DFT3"/>
<dbReference type="OMA" id="YHRYMIS"/>
<dbReference type="OrthoDB" id="27483at2759"/>
<dbReference type="PhylomeDB" id="Q6DFT3"/>
<dbReference type="TreeFam" id="TF315190"/>
<dbReference type="Proteomes" id="UP000008143">
    <property type="component" value="Chromosome 5"/>
</dbReference>
<dbReference type="Bgee" id="ENSXETG00000006072">
    <property type="expression patterns" value="Expressed in ovary and 13 other cell types or tissues"/>
</dbReference>
<dbReference type="GO" id="GO:0005634">
    <property type="term" value="C:nucleus"/>
    <property type="evidence" value="ECO:0007669"/>
    <property type="project" value="UniProtKB-ARBA"/>
</dbReference>
<dbReference type="GO" id="GO:0019888">
    <property type="term" value="F:protein phosphatase regulator activity"/>
    <property type="evidence" value="ECO:0007669"/>
    <property type="project" value="InterPro"/>
</dbReference>
<dbReference type="FunFam" id="2.30.29.30:FF:000051">
    <property type="entry name" value="Serine/threonine-protein phosphatase 4 regulatory subunit 3B"/>
    <property type="match status" value="1"/>
</dbReference>
<dbReference type="Gene3D" id="1.25.10.10">
    <property type="entry name" value="Leucine-rich Repeat Variant"/>
    <property type="match status" value="1"/>
</dbReference>
<dbReference type="Gene3D" id="2.30.29.30">
    <property type="entry name" value="Pleckstrin-homology domain (PH domain)/Phosphotyrosine-binding domain (PTB)"/>
    <property type="match status" value="1"/>
</dbReference>
<dbReference type="InterPro" id="IPR011989">
    <property type="entry name" value="ARM-like"/>
</dbReference>
<dbReference type="InterPro" id="IPR016024">
    <property type="entry name" value="ARM-type_fold"/>
</dbReference>
<dbReference type="InterPro" id="IPR055236">
    <property type="entry name" value="EVH1_PP4R3"/>
</dbReference>
<dbReference type="InterPro" id="IPR006887">
    <property type="entry name" value="P4R3-like_central_dom"/>
</dbReference>
<dbReference type="InterPro" id="IPR011993">
    <property type="entry name" value="PH-like_dom_sf"/>
</dbReference>
<dbReference type="InterPro" id="IPR051137">
    <property type="entry name" value="PP4R3-like"/>
</dbReference>
<dbReference type="PANTHER" id="PTHR23318">
    <property type="entry name" value="ATP SYNTHASE GAMMA-RELATED"/>
    <property type="match status" value="1"/>
</dbReference>
<dbReference type="PANTHER" id="PTHR23318:SF18">
    <property type="entry name" value="SERINE_THREONINE-PROTEIN PHOSPHATASE 4 REGULATORY SUBUNIT 3B"/>
    <property type="match status" value="1"/>
</dbReference>
<dbReference type="Pfam" id="PF22972">
    <property type="entry name" value="EVH1_PP4R3"/>
    <property type="match status" value="1"/>
</dbReference>
<dbReference type="Pfam" id="PF04802">
    <property type="entry name" value="PP4R3"/>
    <property type="match status" value="1"/>
</dbReference>
<dbReference type="SUPFAM" id="SSF48371">
    <property type="entry name" value="ARM repeat"/>
    <property type="match status" value="1"/>
</dbReference>
<dbReference type="SUPFAM" id="SSF50729">
    <property type="entry name" value="PH domain-like"/>
    <property type="match status" value="1"/>
</dbReference>
<comment type="function">
    <text evidence="1">Regulatory subunit of serine/threonine-protein phosphatase 4 (PP4).</text>
</comment>
<comment type="subunit">
    <text evidence="1">Serine/threonine-protein phosphatase 4 (PP4) occurs in different assemblies of the catalytic and one or more regulatory subunits.</text>
</comment>
<comment type="similarity">
    <text evidence="4">Belongs to the SMEK family.</text>
</comment>
<sequence>MSDTRRRVKVYTLNEDRQWDDRGTGHVSSTYVERLKGMSLLVRAESDGSLLLESKINPNTAYQKQQDTLIVWSEAENYDLALSFQEKAGCDEIWEKICQVQGKDPSVEVTQDPIDESEEERFEEMPETSNLIDLPTCELSKLEEIADLVTSVLSSPIRREKLALALENEGYIKKLLQLFQTCENLDNTEGLHHLYEIIRGILFLNKAALFEVMFSDECIMDVVGCLEYDPALAQPKRHREFLTKTAKFKEVIPITDSELRQKIHQTYRVQYIQDVILPTPSVFEENFLSTLTSFIFFNKVEIVSMLQEDEKFLSEVFAQLTDEATDDDKRRELVNFFKEFCAFSQTLQPQNRDAFFKTLANLGILPALEIVMGMDDLQVRAAATDIFSYLVEFSPSMVREFVMQEAQQSDDDILLINVVIEQMICDSDPELGGAVQLMGLLRTLIDPENMLATANKTEKSEFLNFFYNHCMHVLTAPLLANTSEDKLEKDAVLGSIKTSTVCPDNYQTAQLLALILELLTFCVEHHTYHIKNYIMNKDLLRRVLILMNSKHTFLALCALRFMRRIIGLKDEFYNRYIIKGNLFEPVINALLDNGTRYNLLNSAIIELFEFIRVEDIKSLTSHIVENFYKALESIEYVQTFKGLKTRYEQEKDRQSQKLSSVPSILRSNRFRRDARALEDDEELWFNEDEEEEGEAVVPPVEKTKTEDDFPEGYEKFLETKKAKELEDKENLPKRTSVGGFKFTFSHSVSAANGANSTNSKSVAAHTPPASSNGSSSKNTSLTTTVASAKGSLIGLVDYPDDEDEEEEEDTSPRKRPRLGS</sequence>
<reference key="1">
    <citation type="submission" date="2004-07" db="EMBL/GenBank/DDBJ databases">
        <authorList>
            <consortium name="NIH - Xenopus Gene Collection (XGC) project"/>
        </authorList>
    </citation>
    <scope>NUCLEOTIDE SEQUENCE [LARGE SCALE MRNA]</scope>
    <source>
        <tissue>Embryo</tissue>
    </source>
</reference>
<name>PP4R3_XENTR</name>
<evidence type="ECO:0000250" key="1"/>
<evidence type="ECO:0000250" key="2">
    <source>
        <dbReference type="UniProtKB" id="Q5MIZ7"/>
    </source>
</evidence>
<evidence type="ECO:0000256" key="3">
    <source>
        <dbReference type="SAM" id="MobiDB-lite"/>
    </source>
</evidence>
<evidence type="ECO:0000305" key="4"/>
<organism>
    <name type="scientific">Xenopus tropicalis</name>
    <name type="common">Western clawed frog</name>
    <name type="synonym">Silurana tropicalis</name>
    <dbReference type="NCBI Taxonomy" id="8364"/>
    <lineage>
        <taxon>Eukaryota</taxon>
        <taxon>Metazoa</taxon>
        <taxon>Chordata</taxon>
        <taxon>Craniata</taxon>
        <taxon>Vertebrata</taxon>
        <taxon>Euteleostomi</taxon>
        <taxon>Amphibia</taxon>
        <taxon>Batrachia</taxon>
        <taxon>Anura</taxon>
        <taxon>Pipoidea</taxon>
        <taxon>Pipidae</taxon>
        <taxon>Xenopodinae</taxon>
        <taxon>Xenopus</taxon>
        <taxon>Silurana</taxon>
    </lineage>
</organism>